<accession>A9N0W9</accession>
<proteinExistence type="inferred from homology"/>
<gene>
    <name evidence="1" type="primary">yfiC</name>
    <name type="ordered locus">SPAB_00334</name>
</gene>
<sequence>MSQSGSALRRNGFTFKQFFVAHDRCAMKVGTDGILLGAWAPVADVKRILDIGTGSGLLALMLAQRTDDNVPIDAVELDAGAAMQAQENVAHSPWPHRITVHTDDIQRWAPRQTVRFDLIISNPPYYEPGVECATPQREQARYTATLDHQTLLAIAADCITEDGFFCVVLPEQIGNAFTQQALNMGWHLRLRTDVAENEARLPHRVLLAFSPQAGECFSDRLVIRGSDQHYSESYTALTQAFYLFM</sequence>
<feature type="chain" id="PRO_0000387409" description="tRNA1(Val) (adenine(37)-N6)-methyltransferase">
    <location>
        <begin position="1"/>
        <end position="245"/>
    </location>
</feature>
<dbReference type="EC" id="2.1.1.223" evidence="1"/>
<dbReference type="EMBL" id="CP000886">
    <property type="protein sequence ID" value="ABX65771.1"/>
    <property type="status" value="ALT_INIT"/>
    <property type="molecule type" value="Genomic_DNA"/>
</dbReference>
<dbReference type="SMR" id="A9N0W9"/>
<dbReference type="KEGG" id="spq:SPAB_00334"/>
<dbReference type="PATRIC" id="fig|1016998.12.peg.316"/>
<dbReference type="HOGENOM" id="CLU_061983_0_0_6"/>
<dbReference type="BioCyc" id="SENT1016998:SPAB_RS01370-MONOMER"/>
<dbReference type="Proteomes" id="UP000008556">
    <property type="component" value="Chromosome"/>
</dbReference>
<dbReference type="GO" id="GO:0005737">
    <property type="term" value="C:cytoplasm"/>
    <property type="evidence" value="ECO:0007669"/>
    <property type="project" value="UniProtKB-SubCell"/>
</dbReference>
<dbReference type="GO" id="GO:0003676">
    <property type="term" value="F:nucleic acid binding"/>
    <property type="evidence" value="ECO:0007669"/>
    <property type="project" value="InterPro"/>
</dbReference>
<dbReference type="GO" id="GO:0016430">
    <property type="term" value="F:tRNA (adenine-N6)-methyltransferase activity"/>
    <property type="evidence" value="ECO:0007669"/>
    <property type="project" value="UniProtKB-UniRule"/>
</dbReference>
<dbReference type="GO" id="GO:0032259">
    <property type="term" value="P:methylation"/>
    <property type="evidence" value="ECO:0007669"/>
    <property type="project" value="UniProtKB-KW"/>
</dbReference>
<dbReference type="GO" id="GO:0008033">
    <property type="term" value="P:tRNA processing"/>
    <property type="evidence" value="ECO:0007669"/>
    <property type="project" value="UniProtKB-UniRule"/>
</dbReference>
<dbReference type="CDD" id="cd02440">
    <property type="entry name" value="AdoMet_MTases"/>
    <property type="match status" value="1"/>
</dbReference>
<dbReference type="Gene3D" id="3.40.50.150">
    <property type="entry name" value="Vaccinia Virus protein VP39"/>
    <property type="match status" value="1"/>
</dbReference>
<dbReference type="HAMAP" id="MF_01872">
    <property type="entry name" value="tRNA_methyltr_YfiC"/>
    <property type="match status" value="1"/>
</dbReference>
<dbReference type="InterPro" id="IPR002052">
    <property type="entry name" value="DNA_methylase_N6_adenine_CS"/>
</dbReference>
<dbReference type="InterPro" id="IPR029063">
    <property type="entry name" value="SAM-dependent_MTases_sf"/>
</dbReference>
<dbReference type="InterPro" id="IPR007848">
    <property type="entry name" value="Small_mtfrase_dom"/>
</dbReference>
<dbReference type="InterPro" id="IPR050210">
    <property type="entry name" value="tRNA_Adenine-N(6)_MTase"/>
</dbReference>
<dbReference type="InterPro" id="IPR022882">
    <property type="entry name" value="tRNA_adenine-N6_MeTrfase"/>
</dbReference>
<dbReference type="NCBIfam" id="NF047853">
    <property type="entry name" value="tRm6a37MtseTrmN"/>
    <property type="match status" value="1"/>
</dbReference>
<dbReference type="PANTHER" id="PTHR47739">
    <property type="entry name" value="TRNA1(VAL) (ADENINE(37)-N6)-METHYLTRANSFERASE"/>
    <property type="match status" value="1"/>
</dbReference>
<dbReference type="PANTHER" id="PTHR47739:SF1">
    <property type="entry name" value="TRNA1(VAL) (ADENINE(37)-N6)-METHYLTRANSFERASE"/>
    <property type="match status" value="1"/>
</dbReference>
<dbReference type="Pfam" id="PF05175">
    <property type="entry name" value="MTS"/>
    <property type="match status" value="1"/>
</dbReference>
<dbReference type="SUPFAM" id="SSF53335">
    <property type="entry name" value="S-adenosyl-L-methionine-dependent methyltransferases"/>
    <property type="match status" value="1"/>
</dbReference>
<dbReference type="PROSITE" id="PS00092">
    <property type="entry name" value="N6_MTASE"/>
    <property type="match status" value="1"/>
</dbReference>
<keyword id="KW-0963">Cytoplasm</keyword>
<keyword id="KW-0489">Methyltransferase</keyword>
<keyword id="KW-0949">S-adenosyl-L-methionine</keyword>
<keyword id="KW-0808">Transferase</keyword>
<keyword id="KW-0819">tRNA processing</keyword>
<protein>
    <recommendedName>
        <fullName evidence="1">tRNA1(Val) (adenine(37)-N6)-methyltransferase</fullName>
        <ecNumber evidence="1">2.1.1.223</ecNumber>
    </recommendedName>
    <alternativeName>
        <fullName evidence="1">tRNA m6A37 methyltransferase</fullName>
    </alternativeName>
</protein>
<name>TRMN6_SALPB</name>
<evidence type="ECO:0000255" key="1">
    <source>
        <dbReference type="HAMAP-Rule" id="MF_01872"/>
    </source>
</evidence>
<evidence type="ECO:0000305" key="2"/>
<comment type="function">
    <text evidence="1">Specifically methylates the adenine in position 37 of tRNA(1)(Val) (anticodon cmo5UAC).</text>
</comment>
<comment type="catalytic activity">
    <reaction evidence="1">
        <text>adenosine(37) in tRNA1(Val) + S-adenosyl-L-methionine = N(6)-methyladenosine(37) in tRNA1(Val) + S-adenosyl-L-homocysteine + H(+)</text>
        <dbReference type="Rhea" id="RHEA:43160"/>
        <dbReference type="Rhea" id="RHEA-COMP:10369"/>
        <dbReference type="Rhea" id="RHEA-COMP:10370"/>
        <dbReference type="ChEBI" id="CHEBI:15378"/>
        <dbReference type="ChEBI" id="CHEBI:57856"/>
        <dbReference type="ChEBI" id="CHEBI:59789"/>
        <dbReference type="ChEBI" id="CHEBI:74411"/>
        <dbReference type="ChEBI" id="CHEBI:74449"/>
        <dbReference type="EC" id="2.1.1.223"/>
    </reaction>
</comment>
<comment type="subcellular location">
    <subcellularLocation>
        <location evidence="1">Cytoplasm</location>
    </subcellularLocation>
</comment>
<comment type="similarity">
    <text evidence="1">Belongs to the methyltransferase superfamily. tRNA (adenine-N(6)-)-methyltransferase family.</text>
</comment>
<comment type="sequence caution" evidence="2">
    <conflict type="erroneous initiation">
        <sequence resource="EMBL-CDS" id="ABX65771"/>
    </conflict>
</comment>
<reference key="1">
    <citation type="submission" date="2007-11" db="EMBL/GenBank/DDBJ databases">
        <authorList>
            <consortium name="The Salmonella enterica serovar Paratyphi B Genome Sequencing Project"/>
            <person name="McClelland M."/>
            <person name="Sanderson E.K."/>
            <person name="Porwollik S."/>
            <person name="Spieth J."/>
            <person name="Clifton W.S."/>
            <person name="Fulton R."/>
            <person name="Cordes M."/>
            <person name="Wollam A."/>
            <person name="Shah N."/>
            <person name="Pepin K."/>
            <person name="Bhonagiri V."/>
            <person name="Nash W."/>
            <person name="Johnson M."/>
            <person name="Thiruvilangam P."/>
            <person name="Wilson R."/>
        </authorList>
    </citation>
    <scope>NUCLEOTIDE SEQUENCE [LARGE SCALE GENOMIC DNA]</scope>
    <source>
        <strain>ATCC BAA-1250 / SPB7</strain>
    </source>
</reference>
<organism>
    <name type="scientific">Salmonella paratyphi B (strain ATCC BAA-1250 / SPB7)</name>
    <dbReference type="NCBI Taxonomy" id="1016998"/>
    <lineage>
        <taxon>Bacteria</taxon>
        <taxon>Pseudomonadati</taxon>
        <taxon>Pseudomonadota</taxon>
        <taxon>Gammaproteobacteria</taxon>
        <taxon>Enterobacterales</taxon>
        <taxon>Enterobacteriaceae</taxon>
        <taxon>Salmonella</taxon>
    </lineage>
</organism>